<gene>
    <name evidence="1" type="primary">cemA</name>
    <name type="synonym">ycf10</name>
</gene>
<sequence length="76" mass="8756">ISLLTDFCIGFHSTQGWELMIGSVYKDFGFTPNDQILSCLVSIFPVILDTIFKYSIFRYLNRVSPSLVVIYHSMKE</sequence>
<dbReference type="EMBL" id="X04920">
    <property type="status" value="NOT_ANNOTATED_CDS"/>
    <property type="molecule type" value="Genomic_DNA"/>
</dbReference>
<dbReference type="GO" id="GO:0009706">
    <property type="term" value="C:chloroplast inner membrane"/>
    <property type="evidence" value="ECO:0007669"/>
    <property type="project" value="UniProtKB-SubCell"/>
</dbReference>
<dbReference type="GO" id="GO:0015297">
    <property type="term" value="F:antiporter activity"/>
    <property type="evidence" value="ECO:0007669"/>
    <property type="project" value="UniProtKB-KW"/>
</dbReference>
<dbReference type="GO" id="GO:0006813">
    <property type="term" value="P:potassium ion transport"/>
    <property type="evidence" value="ECO:0007669"/>
    <property type="project" value="UniProtKB-KW"/>
</dbReference>
<dbReference type="GO" id="GO:1902600">
    <property type="term" value="P:proton transmembrane transport"/>
    <property type="evidence" value="ECO:0007669"/>
    <property type="project" value="UniProtKB-KW"/>
</dbReference>
<dbReference type="InterPro" id="IPR004282">
    <property type="entry name" value="CemA"/>
</dbReference>
<dbReference type="PANTHER" id="PTHR33650:SF2">
    <property type="entry name" value="CHLOROPLAST ENVELOPE MEMBRANE PROTEIN"/>
    <property type="match status" value="1"/>
</dbReference>
<dbReference type="PANTHER" id="PTHR33650">
    <property type="entry name" value="CHLOROPLAST ENVELOPE MEMBRANE PROTEIN-RELATED"/>
    <property type="match status" value="1"/>
</dbReference>
<dbReference type="Pfam" id="PF03040">
    <property type="entry name" value="CemA"/>
    <property type="match status" value="1"/>
</dbReference>
<organism>
    <name type="scientific">Vicia faba</name>
    <name type="common">Broad bean</name>
    <name type="synonym">Faba vulgaris</name>
    <dbReference type="NCBI Taxonomy" id="3906"/>
    <lineage>
        <taxon>Eukaryota</taxon>
        <taxon>Viridiplantae</taxon>
        <taxon>Streptophyta</taxon>
        <taxon>Embryophyta</taxon>
        <taxon>Tracheophyta</taxon>
        <taxon>Spermatophyta</taxon>
        <taxon>Magnoliopsida</taxon>
        <taxon>eudicotyledons</taxon>
        <taxon>Gunneridae</taxon>
        <taxon>Pentapetalae</taxon>
        <taxon>rosids</taxon>
        <taxon>fabids</taxon>
        <taxon>Fabales</taxon>
        <taxon>Fabaceae</taxon>
        <taxon>Papilionoideae</taxon>
        <taxon>50 kb inversion clade</taxon>
        <taxon>NPAAA clade</taxon>
        <taxon>Hologalegina</taxon>
        <taxon>IRL clade</taxon>
        <taxon>Fabeae</taxon>
        <taxon>Vicia</taxon>
    </lineage>
</organism>
<evidence type="ECO:0000255" key="1">
    <source>
        <dbReference type="HAMAP-Rule" id="MF_01308"/>
    </source>
</evidence>
<evidence type="ECO:0000305" key="2"/>
<geneLocation type="chloroplast"/>
<feature type="chain" id="PRO_0000216665" description="Potassium/proton antiporter CemA">
    <location>
        <begin position="1" status="less than"/>
        <end position="76"/>
    </location>
</feature>
<feature type="transmembrane region" description="Helical" evidence="1">
    <location>
        <begin position="35"/>
        <end position="52"/>
    </location>
</feature>
<feature type="non-terminal residue">
    <location>
        <position position="1"/>
    </location>
</feature>
<proteinExistence type="inferred from homology"/>
<protein>
    <recommendedName>
        <fullName evidence="1">Potassium/proton antiporter CemA</fullName>
    </recommendedName>
    <alternativeName>
        <fullName evidence="1">Chloroplast envelope membrane protein A</fullName>
        <shortName evidence="1">CemA</shortName>
    </alternativeName>
</protein>
<name>CEMA_VICFA</name>
<keyword id="KW-0050">Antiport</keyword>
<keyword id="KW-0150">Chloroplast</keyword>
<keyword id="KW-0375">Hydrogen ion transport</keyword>
<keyword id="KW-0406">Ion transport</keyword>
<keyword id="KW-0472">Membrane</keyword>
<keyword id="KW-0934">Plastid</keyword>
<keyword id="KW-1001">Plastid inner membrane</keyword>
<keyword id="KW-0630">Potassium</keyword>
<keyword id="KW-0633">Potassium transport</keyword>
<keyword id="KW-0812">Transmembrane</keyword>
<keyword id="KW-1133">Transmembrane helix</keyword>
<keyword id="KW-0813">Transport</keyword>
<accession>P20864</accession>
<comment type="function">
    <text evidence="1">Contributes to K(+)/H(+) antiport activity by supporting proton efflux to control proton extrusion and homeostasis in chloroplasts in a light-dependent manner to modulate photosynthesis. Prevents excessive induction of non-photochemical quenching (NPQ) under continuous-light conditions. Indirectly promotes efficient inorganic carbon uptake into chloroplasts.</text>
</comment>
<comment type="catalytic activity">
    <reaction evidence="1">
        <text>K(+)(in) + H(+)(out) = K(+)(out) + H(+)(in)</text>
        <dbReference type="Rhea" id="RHEA:29467"/>
        <dbReference type="ChEBI" id="CHEBI:15378"/>
        <dbReference type="ChEBI" id="CHEBI:29103"/>
    </reaction>
</comment>
<comment type="subcellular location">
    <subcellularLocation>
        <location evidence="1">Plastid</location>
        <location evidence="1">Chloroplast inner membrane</location>
        <topology evidence="1">Multi-pass membrane protein</topology>
    </subcellularLocation>
</comment>
<comment type="similarity">
    <text evidence="1 2">Belongs to the CemA family.</text>
</comment>
<reference key="1">
    <citation type="journal article" date="1987" name="Nucleic Acids Res.">
        <title>Sequence of the apocytochrome f gene encoded by the Vicia faba chloroplast genome.</title>
        <authorList>
            <person name="Ko K."/>
            <person name="Straus N.A."/>
        </authorList>
    </citation>
    <scope>NUCLEOTIDE SEQUENCE [GENOMIC DNA]</scope>
</reference>